<feature type="chain" id="PRO_1000079835" description="Imidazolonepropionase">
    <location>
        <begin position="1"/>
        <end position="421"/>
    </location>
</feature>
<feature type="binding site" evidence="1">
    <location>
        <position position="81"/>
    </location>
    <ligand>
        <name>Fe(3+)</name>
        <dbReference type="ChEBI" id="CHEBI:29034"/>
    </ligand>
</feature>
<feature type="binding site" evidence="1">
    <location>
        <position position="81"/>
    </location>
    <ligand>
        <name>Zn(2+)</name>
        <dbReference type="ChEBI" id="CHEBI:29105"/>
    </ligand>
</feature>
<feature type="binding site" evidence="1">
    <location>
        <position position="83"/>
    </location>
    <ligand>
        <name>Fe(3+)</name>
        <dbReference type="ChEBI" id="CHEBI:29034"/>
    </ligand>
</feature>
<feature type="binding site" evidence="1">
    <location>
        <position position="83"/>
    </location>
    <ligand>
        <name>Zn(2+)</name>
        <dbReference type="ChEBI" id="CHEBI:29105"/>
    </ligand>
</feature>
<feature type="binding site" evidence="1">
    <location>
        <position position="90"/>
    </location>
    <ligand>
        <name>4-imidazolone-5-propanoate</name>
        <dbReference type="ChEBI" id="CHEBI:77893"/>
    </ligand>
</feature>
<feature type="binding site" evidence="1">
    <location>
        <position position="153"/>
    </location>
    <ligand>
        <name>4-imidazolone-5-propanoate</name>
        <dbReference type="ChEBI" id="CHEBI:77893"/>
    </ligand>
</feature>
<feature type="binding site" evidence="1">
    <location>
        <position position="153"/>
    </location>
    <ligand>
        <name>N-formimidoyl-L-glutamate</name>
        <dbReference type="ChEBI" id="CHEBI:58928"/>
    </ligand>
</feature>
<feature type="binding site" evidence="1">
    <location>
        <position position="186"/>
    </location>
    <ligand>
        <name>4-imidazolone-5-propanoate</name>
        <dbReference type="ChEBI" id="CHEBI:77893"/>
    </ligand>
</feature>
<feature type="binding site" evidence="1">
    <location>
        <position position="251"/>
    </location>
    <ligand>
        <name>Fe(3+)</name>
        <dbReference type="ChEBI" id="CHEBI:29034"/>
    </ligand>
</feature>
<feature type="binding site" evidence="1">
    <location>
        <position position="251"/>
    </location>
    <ligand>
        <name>Zn(2+)</name>
        <dbReference type="ChEBI" id="CHEBI:29105"/>
    </ligand>
</feature>
<feature type="binding site" evidence="1">
    <location>
        <position position="254"/>
    </location>
    <ligand>
        <name>4-imidazolone-5-propanoate</name>
        <dbReference type="ChEBI" id="CHEBI:77893"/>
    </ligand>
</feature>
<feature type="binding site" evidence="1">
    <location>
        <position position="326"/>
    </location>
    <ligand>
        <name>Fe(3+)</name>
        <dbReference type="ChEBI" id="CHEBI:29034"/>
    </ligand>
</feature>
<feature type="binding site" evidence="1">
    <location>
        <position position="326"/>
    </location>
    <ligand>
        <name>Zn(2+)</name>
        <dbReference type="ChEBI" id="CHEBI:29105"/>
    </ligand>
</feature>
<feature type="binding site" evidence="1">
    <location>
        <position position="328"/>
    </location>
    <ligand>
        <name>N-formimidoyl-L-glutamate</name>
        <dbReference type="ChEBI" id="CHEBI:58928"/>
    </ligand>
</feature>
<feature type="binding site" evidence="1">
    <location>
        <position position="330"/>
    </location>
    <ligand>
        <name>N-formimidoyl-L-glutamate</name>
        <dbReference type="ChEBI" id="CHEBI:58928"/>
    </ligand>
</feature>
<feature type="binding site" evidence="1">
    <location>
        <position position="331"/>
    </location>
    <ligand>
        <name>4-imidazolone-5-propanoate</name>
        <dbReference type="ChEBI" id="CHEBI:77893"/>
    </ligand>
</feature>
<organism>
    <name type="scientific">Streptococcus gordonii (strain Challis / ATCC 35105 / BCRC 15272 / CH1 / DL1 / V288)</name>
    <dbReference type="NCBI Taxonomy" id="467705"/>
    <lineage>
        <taxon>Bacteria</taxon>
        <taxon>Bacillati</taxon>
        <taxon>Bacillota</taxon>
        <taxon>Bacilli</taxon>
        <taxon>Lactobacillales</taxon>
        <taxon>Streptococcaceae</taxon>
        <taxon>Streptococcus</taxon>
    </lineage>
</organism>
<reference key="1">
    <citation type="journal article" date="2007" name="J. Bacteriol.">
        <title>Genome-wide transcriptional changes in Streptococcus gordonii in response to competence signaling peptide.</title>
        <authorList>
            <person name="Vickerman M.M."/>
            <person name="Iobst S."/>
            <person name="Jesionowski A.M."/>
            <person name="Gill S.R."/>
        </authorList>
    </citation>
    <scope>NUCLEOTIDE SEQUENCE [LARGE SCALE GENOMIC DNA]</scope>
    <source>
        <strain>Challis / ATCC 35105 / BCRC 15272 / CH1 / DL1 / V288</strain>
    </source>
</reference>
<gene>
    <name evidence="1" type="primary">hutI</name>
    <name type="ordered locus">SGO_1804</name>
</gene>
<protein>
    <recommendedName>
        <fullName evidence="1">Imidazolonepropionase</fullName>
        <ecNumber evidence="1">3.5.2.7</ecNumber>
    </recommendedName>
    <alternativeName>
        <fullName evidence="1">Imidazolone-5-propionate hydrolase</fullName>
    </alternativeName>
</protein>
<proteinExistence type="inferred from homology"/>
<evidence type="ECO:0000255" key="1">
    <source>
        <dbReference type="HAMAP-Rule" id="MF_00372"/>
    </source>
</evidence>
<keyword id="KW-0963">Cytoplasm</keyword>
<keyword id="KW-0369">Histidine metabolism</keyword>
<keyword id="KW-0378">Hydrolase</keyword>
<keyword id="KW-0408">Iron</keyword>
<keyword id="KW-0479">Metal-binding</keyword>
<keyword id="KW-1185">Reference proteome</keyword>
<keyword id="KW-0862">Zinc</keyword>
<comment type="function">
    <text evidence="1">Catalyzes the hydrolytic cleavage of the carbon-nitrogen bond in imidazolone-5-propanoate to yield N-formimidoyl-L-glutamate. It is the third step in the universal histidine degradation pathway.</text>
</comment>
<comment type="catalytic activity">
    <reaction evidence="1">
        <text>4-imidazolone-5-propanoate + H2O = N-formimidoyl-L-glutamate</text>
        <dbReference type="Rhea" id="RHEA:23660"/>
        <dbReference type="ChEBI" id="CHEBI:15377"/>
        <dbReference type="ChEBI" id="CHEBI:58928"/>
        <dbReference type="ChEBI" id="CHEBI:77893"/>
        <dbReference type="EC" id="3.5.2.7"/>
    </reaction>
</comment>
<comment type="cofactor">
    <cofactor evidence="1">
        <name>Zn(2+)</name>
        <dbReference type="ChEBI" id="CHEBI:29105"/>
    </cofactor>
    <cofactor evidence="1">
        <name>Fe(3+)</name>
        <dbReference type="ChEBI" id="CHEBI:29034"/>
    </cofactor>
    <text evidence="1">Binds 1 zinc or iron ion per subunit.</text>
</comment>
<comment type="pathway">
    <text evidence="1">Amino-acid degradation; L-histidine degradation into L-glutamate; N-formimidoyl-L-glutamate from L-histidine: step 3/3.</text>
</comment>
<comment type="subcellular location">
    <subcellularLocation>
        <location evidence="1">Cytoplasm</location>
    </subcellularLocation>
</comment>
<comment type="similarity">
    <text evidence="1">Belongs to the metallo-dependent hydrolases superfamily. HutI family.</text>
</comment>
<name>HUTI_STRGC</name>
<sequence>MTADLLLTHFNQVFCPNDLGHPLFGAEMKEARVLEDGYIAVKDGKILAVGSGEPDASLIGPDTKIQSYEGKIATPGLIDCHTHLVYGGSREHEFAKKLAGVPYLEILAQGGGILSTVRATREASFENLYDKSKKLLDYMLLHGVTTVEAKSGYGLNWETEKRQLDVVGALDRDHEIDLVSTFMAAHAVPPEYKGRSQEYLELIVEEMLPRVKEENLAEFCDIFCEKGVFTADESRYLLSKAKEMGFKLRIHADEIESIGGVDVAAELGATSAEHLMMATDEGIRKMAEAKVIGNLLPATTFSLMEDTYAPARKMLEAGMAITLTTDSNPGSCPTANLQFVMQLGCFMMRLTPVEVLNAVTINAAYSVNRQDKIGSFDTGKQADITILDAKNIDYPLYFFATNLTHQVYKAGKLVVDQGRIV</sequence>
<dbReference type="EC" id="3.5.2.7" evidence="1"/>
<dbReference type="EMBL" id="CP000725">
    <property type="protein sequence ID" value="ABV09769.1"/>
    <property type="molecule type" value="Genomic_DNA"/>
</dbReference>
<dbReference type="RefSeq" id="WP_012130839.1">
    <property type="nucleotide sequence ID" value="NC_009785.1"/>
</dbReference>
<dbReference type="SMR" id="A8AZ63"/>
<dbReference type="STRING" id="467705.SGO_1804"/>
<dbReference type="KEGG" id="sgo:SGO_1804"/>
<dbReference type="eggNOG" id="COG1228">
    <property type="taxonomic scope" value="Bacteria"/>
</dbReference>
<dbReference type="HOGENOM" id="CLU_041647_0_1_9"/>
<dbReference type="UniPathway" id="UPA00379">
    <property type="reaction ID" value="UER00551"/>
</dbReference>
<dbReference type="Proteomes" id="UP000001131">
    <property type="component" value="Chromosome"/>
</dbReference>
<dbReference type="GO" id="GO:0005737">
    <property type="term" value="C:cytoplasm"/>
    <property type="evidence" value="ECO:0007669"/>
    <property type="project" value="UniProtKB-SubCell"/>
</dbReference>
<dbReference type="GO" id="GO:0050480">
    <property type="term" value="F:imidazolonepropionase activity"/>
    <property type="evidence" value="ECO:0007669"/>
    <property type="project" value="UniProtKB-UniRule"/>
</dbReference>
<dbReference type="GO" id="GO:0005506">
    <property type="term" value="F:iron ion binding"/>
    <property type="evidence" value="ECO:0007669"/>
    <property type="project" value="UniProtKB-UniRule"/>
</dbReference>
<dbReference type="GO" id="GO:0008270">
    <property type="term" value="F:zinc ion binding"/>
    <property type="evidence" value="ECO:0007669"/>
    <property type="project" value="UniProtKB-UniRule"/>
</dbReference>
<dbReference type="GO" id="GO:0019556">
    <property type="term" value="P:L-histidine catabolic process to glutamate and formamide"/>
    <property type="evidence" value="ECO:0007669"/>
    <property type="project" value="UniProtKB-UniPathway"/>
</dbReference>
<dbReference type="GO" id="GO:0019557">
    <property type="term" value="P:L-histidine catabolic process to glutamate and formate"/>
    <property type="evidence" value="ECO:0007669"/>
    <property type="project" value="UniProtKB-UniPathway"/>
</dbReference>
<dbReference type="CDD" id="cd01296">
    <property type="entry name" value="Imidazolone-5PH"/>
    <property type="match status" value="1"/>
</dbReference>
<dbReference type="FunFam" id="3.20.20.140:FF:000007">
    <property type="entry name" value="Imidazolonepropionase"/>
    <property type="match status" value="1"/>
</dbReference>
<dbReference type="Gene3D" id="3.20.20.140">
    <property type="entry name" value="Metal-dependent hydrolases"/>
    <property type="match status" value="1"/>
</dbReference>
<dbReference type="Gene3D" id="2.30.40.10">
    <property type="entry name" value="Urease, subunit C, domain 1"/>
    <property type="match status" value="1"/>
</dbReference>
<dbReference type="HAMAP" id="MF_00372">
    <property type="entry name" value="HutI"/>
    <property type="match status" value="1"/>
</dbReference>
<dbReference type="InterPro" id="IPR006680">
    <property type="entry name" value="Amidohydro-rel"/>
</dbReference>
<dbReference type="InterPro" id="IPR005920">
    <property type="entry name" value="HutI"/>
</dbReference>
<dbReference type="InterPro" id="IPR011059">
    <property type="entry name" value="Metal-dep_hydrolase_composite"/>
</dbReference>
<dbReference type="InterPro" id="IPR032466">
    <property type="entry name" value="Metal_Hydrolase"/>
</dbReference>
<dbReference type="NCBIfam" id="TIGR01224">
    <property type="entry name" value="hutI"/>
    <property type="match status" value="1"/>
</dbReference>
<dbReference type="PANTHER" id="PTHR42752">
    <property type="entry name" value="IMIDAZOLONEPROPIONASE"/>
    <property type="match status" value="1"/>
</dbReference>
<dbReference type="PANTHER" id="PTHR42752:SF1">
    <property type="entry name" value="IMIDAZOLONEPROPIONASE-RELATED"/>
    <property type="match status" value="1"/>
</dbReference>
<dbReference type="Pfam" id="PF01979">
    <property type="entry name" value="Amidohydro_1"/>
    <property type="match status" value="1"/>
</dbReference>
<dbReference type="SUPFAM" id="SSF51338">
    <property type="entry name" value="Composite domain of metallo-dependent hydrolases"/>
    <property type="match status" value="1"/>
</dbReference>
<dbReference type="SUPFAM" id="SSF51556">
    <property type="entry name" value="Metallo-dependent hydrolases"/>
    <property type="match status" value="1"/>
</dbReference>
<accession>A8AZ63</accession>